<protein>
    <recommendedName>
        <fullName evidence="1">GMP synthase [glutamine-hydrolyzing]</fullName>
        <ecNumber evidence="1">6.3.5.2</ecNumber>
    </recommendedName>
    <alternativeName>
        <fullName evidence="1">GMP synthetase</fullName>
    </alternativeName>
    <alternativeName>
        <fullName evidence="1">Glutamine amidotransferase</fullName>
    </alternativeName>
</protein>
<organism>
    <name type="scientific">Clostridium botulinum (strain Okra / Type B1)</name>
    <dbReference type="NCBI Taxonomy" id="498213"/>
    <lineage>
        <taxon>Bacteria</taxon>
        <taxon>Bacillati</taxon>
        <taxon>Bacillota</taxon>
        <taxon>Clostridia</taxon>
        <taxon>Eubacteriales</taxon>
        <taxon>Clostridiaceae</taxon>
        <taxon>Clostridium</taxon>
    </lineage>
</organism>
<proteinExistence type="inferred from homology"/>
<gene>
    <name evidence="1" type="primary">guaA</name>
    <name type="ordered locus">CLD_1228</name>
</gene>
<feature type="chain" id="PRO_1000120259" description="GMP synthase [glutamine-hydrolyzing]">
    <location>
        <begin position="1"/>
        <end position="510"/>
    </location>
</feature>
<feature type="domain" description="Glutamine amidotransferase type-1" evidence="1">
    <location>
        <begin position="5"/>
        <end position="195"/>
    </location>
</feature>
<feature type="domain" description="GMPS ATP-PPase" evidence="1">
    <location>
        <begin position="196"/>
        <end position="385"/>
    </location>
</feature>
<feature type="active site" description="Nucleophile" evidence="1">
    <location>
        <position position="82"/>
    </location>
</feature>
<feature type="active site" evidence="1">
    <location>
        <position position="169"/>
    </location>
</feature>
<feature type="active site" evidence="1">
    <location>
        <position position="171"/>
    </location>
</feature>
<feature type="binding site" evidence="1">
    <location>
        <begin position="223"/>
        <end position="229"/>
    </location>
    <ligand>
        <name>ATP</name>
        <dbReference type="ChEBI" id="CHEBI:30616"/>
    </ligand>
</feature>
<evidence type="ECO:0000255" key="1">
    <source>
        <dbReference type="HAMAP-Rule" id="MF_00344"/>
    </source>
</evidence>
<name>GUAA_CLOBK</name>
<keyword id="KW-0067">ATP-binding</keyword>
<keyword id="KW-0315">Glutamine amidotransferase</keyword>
<keyword id="KW-0332">GMP biosynthesis</keyword>
<keyword id="KW-0436">Ligase</keyword>
<keyword id="KW-0547">Nucleotide-binding</keyword>
<keyword id="KW-0658">Purine biosynthesis</keyword>
<comment type="function">
    <text evidence="1">Catalyzes the synthesis of GMP from XMP.</text>
</comment>
<comment type="catalytic activity">
    <reaction evidence="1">
        <text>XMP + L-glutamine + ATP + H2O = GMP + L-glutamate + AMP + diphosphate + 2 H(+)</text>
        <dbReference type="Rhea" id="RHEA:11680"/>
        <dbReference type="ChEBI" id="CHEBI:15377"/>
        <dbReference type="ChEBI" id="CHEBI:15378"/>
        <dbReference type="ChEBI" id="CHEBI:29985"/>
        <dbReference type="ChEBI" id="CHEBI:30616"/>
        <dbReference type="ChEBI" id="CHEBI:33019"/>
        <dbReference type="ChEBI" id="CHEBI:57464"/>
        <dbReference type="ChEBI" id="CHEBI:58115"/>
        <dbReference type="ChEBI" id="CHEBI:58359"/>
        <dbReference type="ChEBI" id="CHEBI:456215"/>
        <dbReference type="EC" id="6.3.5.2"/>
    </reaction>
</comment>
<comment type="pathway">
    <text evidence="1">Purine metabolism; GMP biosynthesis; GMP from XMP (L-Gln route): step 1/1.</text>
</comment>
<comment type="subunit">
    <text evidence="1">Homodimer.</text>
</comment>
<sequence>MNKELVLVVDFGGQYNQLIARRVRENRVYCEIVPYTTSIEDIKEKAPKGIIFTGGPNSVYGENAPRVQKELFDLGIPVLGICYGDQLMAHSLEGEVTSPEKREYGKTDVNLDNSSLLFKDMKEKDQCWMSHTDYISKVPKGFKIIATTDECPCAAMENAEKKLYGVQFHPEVEHTLFGKKMLKNFLFNVCNLKGDWSMSSFAEQQIKAIKEKVGDKKVICALSGGVDSSVAAVIVHKAIGKQLTCIFVDHGLLRKDEGDQVEKIFKDQFDMNLIRVNAQDRFLGKLKGVSDPERKRKIIGEEFIRVFEEEAKKLGDISFLVQGTIYPDIVESGTNTSATIKSHHNVGGLPEDMEFKLIEPLRELFKDEVRAVGEELGIPHKLVWRQPFPGPGLAIRVLGEVTEEKLAITREADAIFREEIAKAGLEEKIWQYFACLPNIQSVGVMGDERTYCHTIALRAVTSSDAMTSDWARIPYEVLDKVSRRIVNEVKEVNRIVYDVTSKPPATIEWE</sequence>
<accession>B1IFD1</accession>
<reference key="1">
    <citation type="journal article" date="2007" name="PLoS ONE">
        <title>Analysis of the neurotoxin complex genes in Clostridium botulinum A1-A4 and B1 strains: BoNT/A3, /Ba4 and /B1 clusters are located within plasmids.</title>
        <authorList>
            <person name="Smith T.J."/>
            <person name="Hill K.K."/>
            <person name="Foley B.T."/>
            <person name="Detter J.C."/>
            <person name="Munk A.C."/>
            <person name="Bruce D.C."/>
            <person name="Doggett N.A."/>
            <person name="Smith L.A."/>
            <person name="Marks J.D."/>
            <person name="Xie G."/>
            <person name="Brettin T.S."/>
        </authorList>
    </citation>
    <scope>NUCLEOTIDE SEQUENCE [LARGE SCALE GENOMIC DNA]</scope>
    <source>
        <strain>Okra / Type B1</strain>
    </source>
</reference>
<dbReference type="EC" id="6.3.5.2" evidence="1"/>
<dbReference type="EMBL" id="CP000939">
    <property type="protein sequence ID" value="ACA45861.1"/>
    <property type="molecule type" value="Genomic_DNA"/>
</dbReference>
<dbReference type="RefSeq" id="WP_003400685.1">
    <property type="nucleotide sequence ID" value="NC_010516.1"/>
</dbReference>
<dbReference type="SMR" id="B1IFD1"/>
<dbReference type="MEROPS" id="C26.957"/>
<dbReference type="KEGG" id="cbb:CLD_1228"/>
<dbReference type="HOGENOM" id="CLU_014340_0_5_9"/>
<dbReference type="UniPathway" id="UPA00189">
    <property type="reaction ID" value="UER00296"/>
</dbReference>
<dbReference type="Proteomes" id="UP000008541">
    <property type="component" value="Chromosome"/>
</dbReference>
<dbReference type="GO" id="GO:0005829">
    <property type="term" value="C:cytosol"/>
    <property type="evidence" value="ECO:0007669"/>
    <property type="project" value="TreeGrafter"/>
</dbReference>
<dbReference type="GO" id="GO:0005524">
    <property type="term" value="F:ATP binding"/>
    <property type="evidence" value="ECO:0007669"/>
    <property type="project" value="UniProtKB-UniRule"/>
</dbReference>
<dbReference type="GO" id="GO:0003921">
    <property type="term" value="F:GMP synthase activity"/>
    <property type="evidence" value="ECO:0007669"/>
    <property type="project" value="InterPro"/>
</dbReference>
<dbReference type="CDD" id="cd01742">
    <property type="entry name" value="GATase1_GMP_Synthase"/>
    <property type="match status" value="1"/>
</dbReference>
<dbReference type="CDD" id="cd01997">
    <property type="entry name" value="GMP_synthase_C"/>
    <property type="match status" value="1"/>
</dbReference>
<dbReference type="FunFam" id="3.30.300.10:FF:000002">
    <property type="entry name" value="GMP synthase [glutamine-hydrolyzing]"/>
    <property type="match status" value="1"/>
</dbReference>
<dbReference type="FunFam" id="3.40.50.620:FF:000001">
    <property type="entry name" value="GMP synthase [glutamine-hydrolyzing]"/>
    <property type="match status" value="1"/>
</dbReference>
<dbReference type="FunFam" id="3.40.50.880:FF:000001">
    <property type="entry name" value="GMP synthase [glutamine-hydrolyzing]"/>
    <property type="match status" value="1"/>
</dbReference>
<dbReference type="Gene3D" id="3.30.300.10">
    <property type="match status" value="1"/>
</dbReference>
<dbReference type="Gene3D" id="3.40.50.880">
    <property type="match status" value="1"/>
</dbReference>
<dbReference type="Gene3D" id="3.40.50.620">
    <property type="entry name" value="HUPs"/>
    <property type="match status" value="1"/>
</dbReference>
<dbReference type="HAMAP" id="MF_00344">
    <property type="entry name" value="GMP_synthase"/>
    <property type="match status" value="1"/>
</dbReference>
<dbReference type="InterPro" id="IPR029062">
    <property type="entry name" value="Class_I_gatase-like"/>
</dbReference>
<dbReference type="InterPro" id="IPR017926">
    <property type="entry name" value="GATASE"/>
</dbReference>
<dbReference type="InterPro" id="IPR001674">
    <property type="entry name" value="GMP_synth_C"/>
</dbReference>
<dbReference type="InterPro" id="IPR004739">
    <property type="entry name" value="GMP_synth_GATase"/>
</dbReference>
<dbReference type="InterPro" id="IPR022955">
    <property type="entry name" value="GMP_synthase"/>
</dbReference>
<dbReference type="InterPro" id="IPR025777">
    <property type="entry name" value="GMPS_ATP_PPase_dom"/>
</dbReference>
<dbReference type="InterPro" id="IPR022310">
    <property type="entry name" value="NAD/GMP_synthase"/>
</dbReference>
<dbReference type="InterPro" id="IPR014729">
    <property type="entry name" value="Rossmann-like_a/b/a_fold"/>
</dbReference>
<dbReference type="NCBIfam" id="TIGR00884">
    <property type="entry name" value="guaA_Cterm"/>
    <property type="match status" value="1"/>
</dbReference>
<dbReference type="NCBIfam" id="TIGR00888">
    <property type="entry name" value="guaA_Nterm"/>
    <property type="match status" value="1"/>
</dbReference>
<dbReference type="NCBIfam" id="NF000848">
    <property type="entry name" value="PRK00074.1"/>
    <property type="match status" value="1"/>
</dbReference>
<dbReference type="PANTHER" id="PTHR11922:SF2">
    <property type="entry name" value="GMP SYNTHASE [GLUTAMINE-HYDROLYZING]"/>
    <property type="match status" value="1"/>
</dbReference>
<dbReference type="PANTHER" id="PTHR11922">
    <property type="entry name" value="GMP SYNTHASE-RELATED"/>
    <property type="match status" value="1"/>
</dbReference>
<dbReference type="Pfam" id="PF00117">
    <property type="entry name" value="GATase"/>
    <property type="match status" value="1"/>
</dbReference>
<dbReference type="Pfam" id="PF00958">
    <property type="entry name" value="GMP_synt_C"/>
    <property type="match status" value="1"/>
</dbReference>
<dbReference type="Pfam" id="PF02540">
    <property type="entry name" value="NAD_synthase"/>
    <property type="match status" value="1"/>
</dbReference>
<dbReference type="PRINTS" id="PR00099">
    <property type="entry name" value="CPSGATASE"/>
</dbReference>
<dbReference type="PRINTS" id="PR00096">
    <property type="entry name" value="GATASE"/>
</dbReference>
<dbReference type="SUPFAM" id="SSF52402">
    <property type="entry name" value="Adenine nucleotide alpha hydrolases-like"/>
    <property type="match status" value="1"/>
</dbReference>
<dbReference type="SUPFAM" id="SSF52317">
    <property type="entry name" value="Class I glutamine amidotransferase-like"/>
    <property type="match status" value="1"/>
</dbReference>
<dbReference type="PROSITE" id="PS51273">
    <property type="entry name" value="GATASE_TYPE_1"/>
    <property type="match status" value="1"/>
</dbReference>
<dbReference type="PROSITE" id="PS51553">
    <property type="entry name" value="GMPS_ATP_PPASE"/>
    <property type="match status" value="1"/>
</dbReference>